<name>METE_SHIDS</name>
<sequence>MTILNHTLGFPRVGLRRELKKAQESYWAGNSTREELLAVGRELRARHWDQQKQAGIDLLPVGDFAWYDHVLTTSLLLGNVPARHQNKDGSVDIDTLFRIGRGRAPTGEPAAAAEMTKWFNTNYHYMVPEFVKGQQFKLTWTQLLEEVDEALALGHNVKPVLLGPVTWLWLGKVKGEQFDRLSLLNDILPVYQQVLAELAKRGIEWVQIDEPALVLELPQAWLDAYKPAYDALQGQVKLLLTTYFEGVTPNLDTITALPVQGLHVDLVHGKDDVVELHKRLPSDWLLSAGLINGRNVWRADLTEKYAQIKDIVGKRDLWVASSCSLLHSPIDLSVETRLDAEVKSWFAFALQKCHELALLRDVLNSGDTAALAEWSAPIQARRHSTRVHNPAVEKRLAAITAQDSQRANVYEVRAEAQRARFKLPAWPTTTIGSFPQTTEIRTLRLDFKKGNLDANNYRTGIAEHIRQAIVEQERLGLDVLVHGEAERNDMVEYFGEHLDGFVFTQNGWVQSYGSRCVKPPIVIGDVSRPAPITVEWAKYAQSLTDKPVKGMLTGPVTILCWSFPREDVSRETIAKQIALALRDEVADLEAAGIGIIQIDEPALREGLPLRRSDWDAYLQWGVEAFRINAAVAKDDTQIHTHMCYCEFNDIMDSIAALDADVITIETSRSDMELLESFEEFDYPNEIGPGVYDIHSPNVPSVEWIEALLKKAAKRIPAERLWVNPDCGLKTRGWPETRAALANMVQAAQNLRRG</sequence>
<comment type="function">
    <text evidence="1">Catalyzes the transfer of a methyl group from 5-methyltetrahydrofolate to homocysteine resulting in methionine formation.</text>
</comment>
<comment type="catalytic activity">
    <reaction evidence="1">
        <text>5-methyltetrahydropteroyltri-L-glutamate + L-homocysteine = tetrahydropteroyltri-L-glutamate + L-methionine</text>
        <dbReference type="Rhea" id="RHEA:21196"/>
        <dbReference type="ChEBI" id="CHEBI:57844"/>
        <dbReference type="ChEBI" id="CHEBI:58140"/>
        <dbReference type="ChEBI" id="CHEBI:58199"/>
        <dbReference type="ChEBI" id="CHEBI:58207"/>
        <dbReference type="EC" id="2.1.1.14"/>
    </reaction>
</comment>
<comment type="cofactor">
    <cofactor evidence="1">
        <name>Zn(2+)</name>
        <dbReference type="ChEBI" id="CHEBI:29105"/>
    </cofactor>
    <text evidence="1">Binds 1 zinc ion per subunit.</text>
</comment>
<comment type="pathway">
    <text evidence="1">Amino-acid biosynthesis; L-methionine biosynthesis via de novo pathway; L-methionine from L-homocysteine (MetE route): step 1/1.</text>
</comment>
<comment type="similarity">
    <text evidence="1">Belongs to the vitamin-B12 independent methionine synthase family.</text>
</comment>
<dbReference type="EC" id="2.1.1.14" evidence="1"/>
<dbReference type="EMBL" id="CP000034">
    <property type="protein sequence ID" value="ABB63848.1"/>
    <property type="molecule type" value="Genomic_DNA"/>
</dbReference>
<dbReference type="RefSeq" id="WP_000153924.1">
    <property type="nucleotide sequence ID" value="NC_007606.1"/>
</dbReference>
<dbReference type="RefSeq" id="YP_405339.1">
    <property type="nucleotide sequence ID" value="NC_007606.1"/>
</dbReference>
<dbReference type="SMR" id="Q32A07"/>
<dbReference type="STRING" id="300267.SDY_3914"/>
<dbReference type="EnsemblBacteria" id="ABB63848">
    <property type="protein sequence ID" value="ABB63848"/>
    <property type="gene ID" value="SDY_3914"/>
</dbReference>
<dbReference type="KEGG" id="sdy:SDY_3914"/>
<dbReference type="PATRIC" id="fig|300267.13.peg.4622"/>
<dbReference type="HOGENOM" id="CLU_013175_0_0_6"/>
<dbReference type="UniPathway" id="UPA00051">
    <property type="reaction ID" value="UER00082"/>
</dbReference>
<dbReference type="Proteomes" id="UP000002716">
    <property type="component" value="Chromosome"/>
</dbReference>
<dbReference type="GO" id="GO:0003871">
    <property type="term" value="F:5-methyltetrahydropteroyltriglutamate-homocysteine S-methyltransferase activity"/>
    <property type="evidence" value="ECO:0007669"/>
    <property type="project" value="UniProtKB-UniRule"/>
</dbReference>
<dbReference type="GO" id="GO:0008270">
    <property type="term" value="F:zinc ion binding"/>
    <property type="evidence" value="ECO:0007669"/>
    <property type="project" value="InterPro"/>
</dbReference>
<dbReference type="GO" id="GO:0009086">
    <property type="term" value="P:methionine biosynthetic process"/>
    <property type="evidence" value="ECO:0007669"/>
    <property type="project" value="UniProtKB-UniRule"/>
</dbReference>
<dbReference type="GO" id="GO:0032259">
    <property type="term" value="P:methylation"/>
    <property type="evidence" value="ECO:0007669"/>
    <property type="project" value="UniProtKB-KW"/>
</dbReference>
<dbReference type="CDD" id="cd03311">
    <property type="entry name" value="CIMS_C_terminal_like"/>
    <property type="match status" value="1"/>
</dbReference>
<dbReference type="CDD" id="cd03312">
    <property type="entry name" value="CIMS_N_terminal_like"/>
    <property type="match status" value="1"/>
</dbReference>
<dbReference type="FunFam" id="3.20.20.210:FF:000002">
    <property type="entry name" value="5-methyltetrahydropteroyltriglutamate--homocysteine methyltransferase"/>
    <property type="match status" value="1"/>
</dbReference>
<dbReference type="FunFam" id="3.20.20.210:FF:000003">
    <property type="entry name" value="5-methyltetrahydropteroyltriglutamate--homocysteine methyltransferase"/>
    <property type="match status" value="1"/>
</dbReference>
<dbReference type="Gene3D" id="3.20.20.210">
    <property type="match status" value="2"/>
</dbReference>
<dbReference type="HAMAP" id="MF_00172">
    <property type="entry name" value="Meth_synth"/>
    <property type="match status" value="1"/>
</dbReference>
<dbReference type="InterPro" id="IPR013215">
    <property type="entry name" value="Cbl-indep_Met_Synth_N"/>
</dbReference>
<dbReference type="InterPro" id="IPR006276">
    <property type="entry name" value="Cobalamin-indep_Met_synthase"/>
</dbReference>
<dbReference type="InterPro" id="IPR002629">
    <property type="entry name" value="Met_Synth_C/arc"/>
</dbReference>
<dbReference type="InterPro" id="IPR038071">
    <property type="entry name" value="UROD/MetE-like_sf"/>
</dbReference>
<dbReference type="NCBIfam" id="TIGR01371">
    <property type="entry name" value="met_syn_B12ind"/>
    <property type="match status" value="1"/>
</dbReference>
<dbReference type="NCBIfam" id="NF003556">
    <property type="entry name" value="PRK05222.1"/>
    <property type="match status" value="1"/>
</dbReference>
<dbReference type="PANTHER" id="PTHR30519">
    <property type="entry name" value="5-METHYLTETRAHYDROPTEROYLTRIGLUTAMATE--HOMOCYSTEINE METHYLTRANSFERASE"/>
    <property type="match status" value="1"/>
</dbReference>
<dbReference type="Pfam" id="PF08267">
    <property type="entry name" value="Meth_synt_1"/>
    <property type="match status" value="1"/>
</dbReference>
<dbReference type="Pfam" id="PF01717">
    <property type="entry name" value="Meth_synt_2"/>
    <property type="match status" value="1"/>
</dbReference>
<dbReference type="PIRSF" id="PIRSF000382">
    <property type="entry name" value="MeTrfase_B12_ind"/>
    <property type="match status" value="1"/>
</dbReference>
<dbReference type="SUPFAM" id="SSF51726">
    <property type="entry name" value="UROD/MetE-like"/>
    <property type="match status" value="2"/>
</dbReference>
<accession>Q32A07</accession>
<proteinExistence type="inferred from homology"/>
<reference key="1">
    <citation type="journal article" date="2005" name="Nucleic Acids Res.">
        <title>Genome dynamics and diversity of Shigella species, the etiologic agents of bacillary dysentery.</title>
        <authorList>
            <person name="Yang F."/>
            <person name="Yang J."/>
            <person name="Zhang X."/>
            <person name="Chen L."/>
            <person name="Jiang Y."/>
            <person name="Yan Y."/>
            <person name="Tang X."/>
            <person name="Wang J."/>
            <person name="Xiong Z."/>
            <person name="Dong J."/>
            <person name="Xue Y."/>
            <person name="Zhu Y."/>
            <person name="Xu X."/>
            <person name="Sun L."/>
            <person name="Chen S."/>
            <person name="Nie H."/>
            <person name="Peng J."/>
            <person name="Xu J."/>
            <person name="Wang Y."/>
            <person name="Yuan Z."/>
            <person name="Wen Y."/>
            <person name="Yao Z."/>
            <person name="Shen Y."/>
            <person name="Qiang B."/>
            <person name="Hou Y."/>
            <person name="Yu J."/>
            <person name="Jin Q."/>
        </authorList>
    </citation>
    <scope>NUCLEOTIDE SEQUENCE [LARGE SCALE GENOMIC DNA]</scope>
    <source>
        <strain>Sd197</strain>
    </source>
</reference>
<organism>
    <name type="scientific">Shigella dysenteriae serotype 1 (strain Sd197)</name>
    <dbReference type="NCBI Taxonomy" id="300267"/>
    <lineage>
        <taxon>Bacteria</taxon>
        <taxon>Pseudomonadati</taxon>
        <taxon>Pseudomonadota</taxon>
        <taxon>Gammaproteobacteria</taxon>
        <taxon>Enterobacterales</taxon>
        <taxon>Enterobacteriaceae</taxon>
        <taxon>Shigella</taxon>
    </lineage>
</organism>
<protein>
    <recommendedName>
        <fullName evidence="1">5-methyltetrahydropteroyltriglutamate--homocysteine methyltransferase</fullName>
        <ecNumber evidence="1">2.1.1.14</ecNumber>
    </recommendedName>
    <alternativeName>
        <fullName evidence="1">Cobalamin-independent methionine synthase</fullName>
    </alternativeName>
    <alternativeName>
        <fullName evidence="1">Methionine synthase, vitamin-B12 independent isozyme</fullName>
    </alternativeName>
</protein>
<evidence type="ECO:0000255" key="1">
    <source>
        <dbReference type="HAMAP-Rule" id="MF_00172"/>
    </source>
</evidence>
<feature type="chain" id="PRO_1000017273" description="5-methyltetrahydropteroyltriglutamate--homocysteine methyltransferase">
    <location>
        <begin position="1"/>
        <end position="753"/>
    </location>
</feature>
<feature type="active site" description="Proton donor" evidence="1">
    <location>
        <position position="694"/>
    </location>
</feature>
<feature type="binding site" evidence="1">
    <location>
        <begin position="17"/>
        <end position="20"/>
    </location>
    <ligand>
        <name>5-methyltetrahydropteroyltri-L-glutamate</name>
        <dbReference type="ChEBI" id="CHEBI:58207"/>
    </ligand>
</feature>
<feature type="binding site" evidence="1">
    <location>
        <position position="117"/>
    </location>
    <ligand>
        <name>5-methyltetrahydropteroyltri-L-glutamate</name>
        <dbReference type="ChEBI" id="CHEBI:58207"/>
    </ligand>
</feature>
<feature type="binding site" evidence="1">
    <location>
        <begin position="431"/>
        <end position="433"/>
    </location>
    <ligand>
        <name>L-homocysteine</name>
        <dbReference type="ChEBI" id="CHEBI:58199"/>
    </ligand>
</feature>
<feature type="binding site" evidence="1">
    <location>
        <begin position="431"/>
        <end position="433"/>
    </location>
    <ligand>
        <name>L-methionine</name>
        <dbReference type="ChEBI" id="CHEBI:57844"/>
    </ligand>
</feature>
<feature type="binding site" evidence="1">
    <location>
        <position position="484"/>
    </location>
    <ligand>
        <name>L-homocysteine</name>
        <dbReference type="ChEBI" id="CHEBI:58199"/>
    </ligand>
</feature>
<feature type="binding site" evidence="1">
    <location>
        <position position="484"/>
    </location>
    <ligand>
        <name>L-methionine</name>
        <dbReference type="ChEBI" id="CHEBI:57844"/>
    </ligand>
</feature>
<feature type="binding site" evidence="1">
    <location>
        <begin position="515"/>
        <end position="516"/>
    </location>
    <ligand>
        <name>5-methyltetrahydropteroyltri-L-glutamate</name>
        <dbReference type="ChEBI" id="CHEBI:58207"/>
    </ligand>
</feature>
<feature type="binding site" evidence="1">
    <location>
        <position position="561"/>
    </location>
    <ligand>
        <name>5-methyltetrahydropteroyltri-L-glutamate</name>
        <dbReference type="ChEBI" id="CHEBI:58207"/>
    </ligand>
</feature>
<feature type="binding site" evidence="1">
    <location>
        <position position="599"/>
    </location>
    <ligand>
        <name>L-homocysteine</name>
        <dbReference type="ChEBI" id="CHEBI:58199"/>
    </ligand>
</feature>
<feature type="binding site" evidence="1">
    <location>
        <position position="599"/>
    </location>
    <ligand>
        <name>L-methionine</name>
        <dbReference type="ChEBI" id="CHEBI:57844"/>
    </ligand>
</feature>
<feature type="binding site" evidence="1">
    <location>
        <position position="605"/>
    </location>
    <ligand>
        <name>5-methyltetrahydropteroyltri-L-glutamate</name>
        <dbReference type="ChEBI" id="CHEBI:58207"/>
    </ligand>
</feature>
<feature type="binding site" evidence="1">
    <location>
        <position position="641"/>
    </location>
    <ligand>
        <name>Zn(2+)</name>
        <dbReference type="ChEBI" id="CHEBI:29105"/>
        <note>catalytic</note>
    </ligand>
</feature>
<feature type="binding site" evidence="1">
    <location>
        <position position="643"/>
    </location>
    <ligand>
        <name>Zn(2+)</name>
        <dbReference type="ChEBI" id="CHEBI:29105"/>
        <note>catalytic</note>
    </ligand>
</feature>
<feature type="binding site" evidence="1">
    <location>
        <position position="665"/>
    </location>
    <ligand>
        <name>Zn(2+)</name>
        <dbReference type="ChEBI" id="CHEBI:29105"/>
        <note>catalytic</note>
    </ligand>
</feature>
<feature type="binding site" evidence="1">
    <location>
        <position position="726"/>
    </location>
    <ligand>
        <name>Zn(2+)</name>
        <dbReference type="ChEBI" id="CHEBI:29105"/>
        <note>catalytic</note>
    </ligand>
</feature>
<gene>
    <name evidence="1" type="primary">metE</name>
    <name type="ordered locus">SDY_3914</name>
</gene>
<keyword id="KW-0028">Amino-acid biosynthesis</keyword>
<keyword id="KW-0479">Metal-binding</keyword>
<keyword id="KW-0486">Methionine biosynthesis</keyword>
<keyword id="KW-0489">Methyltransferase</keyword>
<keyword id="KW-1185">Reference proteome</keyword>
<keyword id="KW-0677">Repeat</keyword>
<keyword id="KW-0808">Transferase</keyword>
<keyword id="KW-0862">Zinc</keyword>